<keyword id="KW-0970">Cilium biogenesis/degradation</keyword>
<keyword id="KW-0963">Cytoplasm</keyword>
<keyword id="KW-0238">DNA-binding</keyword>
<keyword id="KW-0539">Nucleus</keyword>
<keyword id="KW-1185">Reference proteome</keyword>
<keyword id="KW-0804">Transcription</keyword>
<keyword id="KW-0805">Transcription regulation</keyword>
<gene>
    <name type="primary">rfx2</name>
    <name type="ORF">zgc:91808</name>
</gene>
<accession>Q5EAP5</accession>
<sequence>MQRSEGGSETPSTVALRTSTSAQAPVVQPVPASQQRVLVQATGSSQKGAQVQQLPVPRVQQVPQQVQQVQHYHSQQVQYVEGAEAVYPNGTIRAAYSYNPESQLYGQGSGSAYFDSQAGGAQVTTVVSSGGVPTHGMVGIAMDVGGSQIISSGSAYLIHGGMEGGRHHTSHSSRSSSAMLEMAIENLQKSEGIATHKSSLLNSHLQWLLDNYETAEGVSLPRSSLYNHYLRHCQEQKLDPVNAASFGKLIRSVFMGLRTRRLGTRGNSKYHYYGIRLKPDSPLNRMQEDTQYMAMRQTPVHQKQRFKPFHKMDGMGDSLNSGSQHLSSTPEQSVAAQCQHHQQYIDVSHVLPPFPSLDLGSCPLPESISMTDVKKLQSSYRIHCEATLDVVMNLQFHLIEKLWQTFWHSTAPSSDGATTIPNSEEDVEDIRGFPRDKLITLCKYEPIKQWMRSCDHILYQALVEILIPDVLRPVPSTLTQAIRNFAKSLEGWLTSAMTNFPPEIISTKAAVVSAFAQTLRRYTSLNHLAQAARAVLQNTSQINQMLSDLNRVDFANVQEQASWVCQCDESVVQRLELDFKATLQQQSSLDQWAAWLDNVVNQVLKPYDGSLSFPRAARQFLLKWSFYSSMVIRDLTLRSAASFGSFHLIRLLYDEYMFYLVEHRVAQATGETPIAVMGEFSDLSSLMPSLKEQDTSFSDDMTSDGDMSRMSERSLTEPAVKRERIEIPHSLQEI</sequence>
<feature type="chain" id="PRO_0000380697" description="DNA-binding protein RFX2">
    <location>
        <begin position="1"/>
        <end position="734"/>
    </location>
</feature>
<feature type="DNA-binding region" description="RFX-type winged-helix" evidence="3">
    <location>
        <begin position="204"/>
        <end position="279"/>
    </location>
</feature>
<feature type="region of interest" description="Disordered" evidence="4">
    <location>
        <begin position="1"/>
        <end position="31"/>
    </location>
</feature>
<feature type="region of interest" description="Disordered" evidence="4">
    <location>
        <begin position="694"/>
        <end position="722"/>
    </location>
</feature>
<feature type="compositionally biased region" description="Polar residues" evidence="4">
    <location>
        <begin position="1"/>
        <end position="23"/>
    </location>
</feature>
<feature type="compositionally biased region" description="Basic and acidic residues" evidence="4">
    <location>
        <begin position="706"/>
        <end position="722"/>
    </location>
</feature>
<reference key="1">
    <citation type="submission" date="2005-02" db="EMBL/GenBank/DDBJ databases">
        <authorList>
            <consortium name="NIH - Zebrafish Gene Collection (ZGC) project"/>
        </authorList>
    </citation>
    <scope>NUCLEOTIDE SEQUENCE [LARGE SCALE MRNA]</scope>
</reference>
<reference key="2">
    <citation type="journal article" date="2012" name="Dev. Biol.">
        <title>RFX2 is essential in the ciliated organ of asymmetry and an RFX2 transgene identifies a population of ciliated cells sufficient for fluid flow.</title>
        <authorList>
            <person name="Bisgrove B.W."/>
            <person name="Makova S."/>
            <person name="Yost H.J."/>
            <person name="Brueckner M."/>
        </authorList>
    </citation>
    <scope>FUNCTION</scope>
    <scope>DEVELOPMENTAL STAGE</scope>
    <scope>DISRUPTION PHENOTYPE</scope>
</reference>
<proteinExistence type="evidence at transcript level"/>
<dbReference type="EMBL" id="BC090314">
    <property type="protein sequence ID" value="AAH90314.1"/>
    <property type="molecule type" value="mRNA"/>
</dbReference>
<dbReference type="RefSeq" id="NP_001013296.1">
    <property type="nucleotide sequence ID" value="NM_001013278.1"/>
</dbReference>
<dbReference type="SMR" id="Q5EAP5"/>
<dbReference type="FunCoup" id="Q5EAP5">
    <property type="interactions" value="660"/>
</dbReference>
<dbReference type="STRING" id="7955.ENSDARP00000039332"/>
<dbReference type="PaxDb" id="7955-ENSDARP00000108057"/>
<dbReference type="Ensembl" id="ENSDART00000029939">
    <property type="protein sequence ID" value="ENSDARP00000039332"/>
    <property type="gene ID" value="ENSDARG00000013575"/>
</dbReference>
<dbReference type="GeneID" id="503590"/>
<dbReference type="KEGG" id="dre:503590"/>
<dbReference type="AGR" id="ZFIN:ZDB-GENE-050227-4"/>
<dbReference type="CTD" id="5990"/>
<dbReference type="ZFIN" id="ZDB-GENE-050227-4">
    <property type="gene designation" value="rfx2"/>
</dbReference>
<dbReference type="eggNOG" id="KOG3712">
    <property type="taxonomic scope" value="Eukaryota"/>
</dbReference>
<dbReference type="HOGENOM" id="CLU_010393_1_1_1"/>
<dbReference type="InParanoid" id="Q5EAP5"/>
<dbReference type="OMA" id="QFIDMSH"/>
<dbReference type="OrthoDB" id="10056949at2759"/>
<dbReference type="PhylomeDB" id="Q5EAP5"/>
<dbReference type="TreeFam" id="TF321340"/>
<dbReference type="PRO" id="PR:Q5EAP5"/>
<dbReference type="Proteomes" id="UP000000437">
    <property type="component" value="Chromosome 8"/>
</dbReference>
<dbReference type="Bgee" id="ENSDARG00000013575">
    <property type="expression patterns" value="Expressed in testis and 79 other cell types or tissues"/>
</dbReference>
<dbReference type="ExpressionAtlas" id="Q5EAP5">
    <property type="expression patterns" value="baseline and differential"/>
</dbReference>
<dbReference type="GO" id="GO:0005737">
    <property type="term" value="C:cytoplasm"/>
    <property type="evidence" value="ECO:0007669"/>
    <property type="project" value="UniProtKB-SubCell"/>
</dbReference>
<dbReference type="GO" id="GO:0005634">
    <property type="term" value="C:nucleus"/>
    <property type="evidence" value="ECO:0007669"/>
    <property type="project" value="UniProtKB-SubCell"/>
</dbReference>
<dbReference type="GO" id="GO:0003700">
    <property type="term" value="F:DNA-binding transcription factor activity"/>
    <property type="evidence" value="ECO:0000250"/>
    <property type="project" value="UniProtKB"/>
</dbReference>
<dbReference type="GO" id="GO:0000981">
    <property type="term" value="F:DNA-binding transcription factor activity, RNA polymerase II-specific"/>
    <property type="evidence" value="ECO:0000318"/>
    <property type="project" value="GO_Central"/>
</dbReference>
<dbReference type="GO" id="GO:0000978">
    <property type="term" value="F:RNA polymerase II cis-regulatory region sequence-specific DNA binding"/>
    <property type="evidence" value="ECO:0000250"/>
    <property type="project" value="UniProtKB"/>
</dbReference>
<dbReference type="GO" id="GO:0060271">
    <property type="term" value="P:cilium assembly"/>
    <property type="evidence" value="ECO:0000250"/>
    <property type="project" value="UniProtKB"/>
</dbReference>
<dbReference type="GO" id="GO:0007368">
    <property type="term" value="P:determination of left/right symmetry"/>
    <property type="evidence" value="ECO:0000315"/>
    <property type="project" value="ZFIN"/>
</dbReference>
<dbReference type="GO" id="GO:0070121">
    <property type="term" value="P:Kupffer's vesicle development"/>
    <property type="evidence" value="ECO:0000315"/>
    <property type="project" value="ZFIN"/>
</dbReference>
<dbReference type="GO" id="GO:0006357">
    <property type="term" value="P:regulation of transcription by RNA polymerase II"/>
    <property type="evidence" value="ECO:0000250"/>
    <property type="project" value="UniProtKB"/>
</dbReference>
<dbReference type="FunFam" id="1.10.10.10:FF:000017">
    <property type="entry name" value="transcription factor RFX3 isoform X1"/>
    <property type="match status" value="1"/>
</dbReference>
<dbReference type="Gene3D" id="1.10.10.10">
    <property type="entry name" value="Winged helix-like DNA-binding domain superfamily/Winged helix DNA-binding domain"/>
    <property type="match status" value="1"/>
</dbReference>
<dbReference type="InterPro" id="IPR003150">
    <property type="entry name" value="DNA-bd_RFX"/>
</dbReference>
<dbReference type="InterPro" id="IPR039779">
    <property type="entry name" value="RFX-like"/>
</dbReference>
<dbReference type="InterPro" id="IPR007668">
    <property type="entry name" value="RFX1_trans_act"/>
</dbReference>
<dbReference type="InterPro" id="IPR036388">
    <property type="entry name" value="WH-like_DNA-bd_sf"/>
</dbReference>
<dbReference type="InterPro" id="IPR036390">
    <property type="entry name" value="WH_DNA-bd_sf"/>
</dbReference>
<dbReference type="PANTHER" id="PTHR12619:SF17">
    <property type="entry name" value="DNA-BINDING PROTEIN RFX2"/>
    <property type="match status" value="1"/>
</dbReference>
<dbReference type="PANTHER" id="PTHR12619">
    <property type="entry name" value="RFX TRANSCRIPTION FACTOR FAMILY"/>
    <property type="match status" value="1"/>
</dbReference>
<dbReference type="Pfam" id="PF25340">
    <property type="entry name" value="BCD_RFX"/>
    <property type="match status" value="1"/>
</dbReference>
<dbReference type="Pfam" id="PF04589">
    <property type="entry name" value="RFX1_trans_act"/>
    <property type="match status" value="1"/>
</dbReference>
<dbReference type="Pfam" id="PF02257">
    <property type="entry name" value="RFX_DNA_binding"/>
    <property type="match status" value="1"/>
</dbReference>
<dbReference type="SUPFAM" id="SSF46785">
    <property type="entry name" value="Winged helix' DNA-binding domain"/>
    <property type="match status" value="1"/>
</dbReference>
<dbReference type="PROSITE" id="PS51526">
    <property type="entry name" value="RFX_DBD"/>
    <property type="match status" value="1"/>
</dbReference>
<name>RFX2_DANRE</name>
<organism>
    <name type="scientific">Danio rerio</name>
    <name type="common">Zebrafish</name>
    <name type="synonym">Brachydanio rerio</name>
    <dbReference type="NCBI Taxonomy" id="7955"/>
    <lineage>
        <taxon>Eukaryota</taxon>
        <taxon>Metazoa</taxon>
        <taxon>Chordata</taxon>
        <taxon>Craniata</taxon>
        <taxon>Vertebrata</taxon>
        <taxon>Euteleostomi</taxon>
        <taxon>Actinopterygii</taxon>
        <taxon>Neopterygii</taxon>
        <taxon>Teleostei</taxon>
        <taxon>Ostariophysi</taxon>
        <taxon>Cypriniformes</taxon>
        <taxon>Danionidae</taxon>
        <taxon>Danioninae</taxon>
        <taxon>Danio</taxon>
    </lineage>
</organism>
<protein>
    <recommendedName>
        <fullName>DNA-binding protein RFX2</fullName>
    </recommendedName>
    <alternativeName>
        <fullName>Regulatory factor X 2</fullName>
    </alternativeName>
</protein>
<comment type="function">
    <text evidence="2 5">Transcription factor that acts as a key regulator of ciliogenesis (PubMed:22233545). Specifically regulates expression of genes required for cilium assembly and function (PubMed:22233545). Recognizes and binds the X-box, a regulatory motif with DNA sequence 5'-GTNRCC(0-3N)RGYAAC-3' present on promoters (By similarity).</text>
</comment>
<comment type="subunit">
    <text evidence="2">Homodimer. Heterodimer; heterodimerizes with other rfx proteins.</text>
</comment>
<comment type="subcellular location">
    <subcellularLocation>
        <location evidence="1 3">Nucleus</location>
    </subcellularLocation>
    <subcellularLocation>
        <location evidence="1">Cytoplasm</location>
    </subcellularLocation>
    <text evidence="1">Mainly expressed in the nucleus and at lower level in cytoplasm.</text>
</comment>
<comment type="disruption phenotype">
    <text evidence="5">Reduced cilia length in the Kupffer's vesicle and impaired left-right asymmetry.</text>
</comment>
<comment type="similarity">
    <text evidence="3">Belongs to the RFX family.</text>
</comment>
<evidence type="ECO:0000250" key="1">
    <source>
        <dbReference type="UniProtKB" id="B2GV50"/>
    </source>
</evidence>
<evidence type="ECO:0000250" key="2">
    <source>
        <dbReference type="UniProtKB" id="P48379"/>
    </source>
</evidence>
<evidence type="ECO:0000255" key="3">
    <source>
        <dbReference type="PROSITE-ProRule" id="PRU00858"/>
    </source>
</evidence>
<evidence type="ECO:0000256" key="4">
    <source>
        <dbReference type="SAM" id="MobiDB-lite"/>
    </source>
</evidence>
<evidence type="ECO:0000269" key="5">
    <source>
    </source>
</evidence>